<keyword id="KW-0687">Ribonucleoprotein</keyword>
<keyword id="KW-0689">Ribosomal protein</keyword>
<keyword id="KW-0694">RNA-binding</keyword>
<keyword id="KW-0699">rRNA-binding</keyword>
<accession>Q3JZI0</accession>
<reference key="1">
    <citation type="journal article" date="2005" name="Proc. Natl. Acad. Sci. U.S.A.">
        <title>Genome analysis of multiple pathogenic isolates of Streptococcus agalactiae: implications for the microbial 'pan-genome'.</title>
        <authorList>
            <person name="Tettelin H."/>
            <person name="Masignani V."/>
            <person name="Cieslewicz M.J."/>
            <person name="Donati C."/>
            <person name="Medini D."/>
            <person name="Ward N.L."/>
            <person name="Angiuoli S.V."/>
            <person name="Crabtree J."/>
            <person name="Jones A.L."/>
            <person name="Durkin A.S."/>
            <person name="DeBoy R.T."/>
            <person name="Davidsen T.M."/>
            <person name="Mora M."/>
            <person name="Scarselli M."/>
            <person name="Margarit y Ros I."/>
            <person name="Peterson J.D."/>
            <person name="Hauser C.R."/>
            <person name="Sundaram J.P."/>
            <person name="Nelson W.C."/>
            <person name="Madupu R."/>
            <person name="Brinkac L.M."/>
            <person name="Dodson R.J."/>
            <person name="Rosovitz M.J."/>
            <person name="Sullivan S.A."/>
            <person name="Daugherty S.C."/>
            <person name="Haft D.H."/>
            <person name="Selengut J."/>
            <person name="Gwinn M.L."/>
            <person name="Zhou L."/>
            <person name="Zafar N."/>
            <person name="Khouri H."/>
            <person name="Radune D."/>
            <person name="Dimitrov G."/>
            <person name="Watkins K."/>
            <person name="O'Connor K.J."/>
            <person name="Smith S."/>
            <person name="Utterback T.R."/>
            <person name="White O."/>
            <person name="Rubens C.E."/>
            <person name="Grandi G."/>
            <person name="Madoff L.C."/>
            <person name="Kasper D.L."/>
            <person name="Telford J.L."/>
            <person name="Wessels M.R."/>
            <person name="Rappuoli R."/>
            <person name="Fraser C.M."/>
        </authorList>
    </citation>
    <scope>NUCLEOTIDE SEQUENCE [LARGE SCALE GENOMIC DNA]</scope>
    <source>
        <strain>ATCC 27591 / A909 / CDC SS700</strain>
    </source>
</reference>
<sequence>MAKYEILYIIRPNIEEEAKNALVARFDSILSDNGATVVESKDWEKRRLAYEIQDFTEGLYHIVNVEAEDAVALNEFDRLSKINGDILRHMIVKVD</sequence>
<evidence type="ECO:0000255" key="1">
    <source>
        <dbReference type="HAMAP-Rule" id="MF_00360"/>
    </source>
</evidence>
<evidence type="ECO:0000305" key="2"/>
<gene>
    <name evidence="1" type="primary">rpsF</name>
    <name type="ordered locus">SAK_1722</name>
</gene>
<comment type="function">
    <text evidence="1">Binds together with bS18 to 16S ribosomal RNA.</text>
</comment>
<comment type="similarity">
    <text evidence="1">Belongs to the bacterial ribosomal protein bS6 family.</text>
</comment>
<name>RS6_STRA1</name>
<protein>
    <recommendedName>
        <fullName evidence="1">Small ribosomal subunit protein bS6</fullName>
    </recommendedName>
    <alternativeName>
        <fullName evidence="2">30S ribosomal protein S6</fullName>
    </alternativeName>
</protein>
<proteinExistence type="inferred from homology"/>
<feature type="chain" id="PRO_0000229581" description="Small ribosomal subunit protein bS6">
    <location>
        <begin position="1"/>
        <end position="95"/>
    </location>
</feature>
<organism>
    <name type="scientific">Streptococcus agalactiae serotype Ia (strain ATCC 27591 / A909 / CDC SS700)</name>
    <dbReference type="NCBI Taxonomy" id="205921"/>
    <lineage>
        <taxon>Bacteria</taxon>
        <taxon>Bacillati</taxon>
        <taxon>Bacillota</taxon>
        <taxon>Bacilli</taxon>
        <taxon>Lactobacillales</taxon>
        <taxon>Streptococcaceae</taxon>
        <taxon>Streptococcus</taxon>
    </lineage>
</organism>
<dbReference type="EMBL" id="CP000114">
    <property type="protein sequence ID" value="ABA46282.1"/>
    <property type="molecule type" value="Genomic_DNA"/>
</dbReference>
<dbReference type="RefSeq" id="WP_001151773.1">
    <property type="nucleotide sequence ID" value="NC_007432.1"/>
</dbReference>
<dbReference type="SMR" id="Q3JZI0"/>
<dbReference type="GeneID" id="66886554"/>
<dbReference type="KEGG" id="sak:SAK_1722"/>
<dbReference type="HOGENOM" id="CLU_113441_5_3_9"/>
<dbReference type="GO" id="GO:0005737">
    <property type="term" value="C:cytoplasm"/>
    <property type="evidence" value="ECO:0007669"/>
    <property type="project" value="UniProtKB-ARBA"/>
</dbReference>
<dbReference type="GO" id="GO:1990904">
    <property type="term" value="C:ribonucleoprotein complex"/>
    <property type="evidence" value="ECO:0007669"/>
    <property type="project" value="UniProtKB-KW"/>
</dbReference>
<dbReference type="GO" id="GO:0005840">
    <property type="term" value="C:ribosome"/>
    <property type="evidence" value="ECO:0007669"/>
    <property type="project" value="UniProtKB-KW"/>
</dbReference>
<dbReference type="GO" id="GO:0070181">
    <property type="term" value="F:small ribosomal subunit rRNA binding"/>
    <property type="evidence" value="ECO:0007669"/>
    <property type="project" value="TreeGrafter"/>
</dbReference>
<dbReference type="GO" id="GO:0003735">
    <property type="term" value="F:structural constituent of ribosome"/>
    <property type="evidence" value="ECO:0007669"/>
    <property type="project" value="InterPro"/>
</dbReference>
<dbReference type="GO" id="GO:0006412">
    <property type="term" value="P:translation"/>
    <property type="evidence" value="ECO:0007669"/>
    <property type="project" value="UniProtKB-UniRule"/>
</dbReference>
<dbReference type="CDD" id="cd00473">
    <property type="entry name" value="bS6"/>
    <property type="match status" value="1"/>
</dbReference>
<dbReference type="FunFam" id="3.30.70.60:FF:000002">
    <property type="entry name" value="30S ribosomal protein S6"/>
    <property type="match status" value="1"/>
</dbReference>
<dbReference type="Gene3D" id="3.30.70.60">
    <property type="match status" value="1"/>
</dbReference>
<dbReference type="HAMAP" id="MF_00360">
    <property type="entry name" value="Ribosomal_bS6"/>
    <property type="match status" value="1"/>
</dbReference>
<dbReference type="InterPro" id="IPR000529">
    <property type="entry name" value="Ribosomal_bS6"/>
</dbReference>
<dbReference type="InterPro" id="IPR035980">
    <property type="entry name" value="Ribosomal_bS6_sf"/>
</dbReference>
<dbReference type="InterPro" id="IPR020814">
    <property type="entry name" value="Ribosomal_S6_plastid/chlpt"/>
</dbReference>
<dbReference type="InterPro" id="IPR014717">
    <property type="entry name" value="Transl_elong_EF1B/ribsomal_bS6"/>
</dbReference>
<dbReference type="NCBIfam" id="TIGR00166">
    <property type="entry name" value="S6"/>
    <property type="match status" value="1"/>
</dbReference>
<dbReference type="PANTHER" id="PTHR21011">
    <property type="entry name" value="MITOCHONDRIAL 28S RIBOSOMAL PROTEIN S6"/>
    <property type="match status" value="1"/>
</dbReference>
<dbReference type="PANTHER" id="PTHR21011:SF1">
    <property type="entry name" value="SMALL RIBOSOMAL SUBUNIT PROTEIN BS6M"/>
    <property type="match status" value="1"/>
</dbReference>
<dbReference type="Pfam" id="PF01250">
    <property type="entry name" value="Ribosomal_S6"/>
    <property type="match status" value="1"/>
</dbReference>
<dbReference type="SUPFAM" id="SSF54995">
    <property type="entry name" value="Ribosomal protein S6"/>
    <property type="match status" value="1"/>
</dbReference>